<keyword id="KW-1015">Disulfide bond</keyword>
<keyword id="KW-0528">Neurotoxin</keyword>
<keyword id="KW-0964">Secreted</keyword>
<keyword id="KW-0732">Signal</keyword>
<keyword id="KW-0800">Toxin</keyword>
<organism>
    <name type="scientific">Conus litteratus</name>
    <name type="common">Lettered cone</name>
    <dbReference type="NCBI Taxonomy" id="89445"/>
    <lineage>
        <taxon>Eukaryota</taxon>
        <taxon>Metazoa</taxon>
        <taxon>Spiralia</taxon>
        <taxon>Lophotrochozoa</taxon>
        <taxon>Mollusca</taxon>
        <taxon>Gastropoda</taxon>
        <taxon>Caenogastropoda</taxon>
        <taxon>Neogastropoda</taxon>
        <taxon>Conoidea</taxon>
        <taxon>Conidae</taxon>
        <taxon>Conus</taxon>
        <taxon>Elisaconus</taxon>
    </lineage>
</organism>
<name>CDS3_CONLT</name>
<comment type="function">
    <text evidence="3">Probable neurotoxin.</text>
</comment>
<comment type="subcellular location">
    <subcellularLocation>
        <location evidence="4">Secreted</location>
    </subcellularLocation>
</comment>
<comment type="tissue specificity">
    <text evidence="4">Expressed by the venom duct.</text>
</comment>
<comment type="domain">
    <text evidence="3">The cysteine framework is XXVIII (C-C-C-CC-C-C-C-C-C).</text>
</comment>
<comment type="PTM">
    <text evidence="3">Contains 5 disulfide bonds.</text>
</comment>
<comment type="similarity">
    <text evidence="3">Belongs to the conotoxin D superfamily.</text>
</comment>
<reference key="1">
    <citation type="journal article" date="2017" name="Peptides">
        <title>Cloning, expression and functional characterization of a D-superfamily conotoxin Lt28.1 with previously undescribed cysteine pattern.</title>
        <authorList>
            <person name="Lu J."/>
            <person name="Zhang K."/>
            <person name="Wang S."/>
            <person name="Sun T."/>
            <person name="Yu S."/>
            <person name="Dai Q."/>
            <person name="Liu Z."/>
        </authorList>
    </citation>
    <scope>NUCLEOTIDE SEQUENCE [MRNA]</scope>
    <source>
        <tissue>Venom duct</tissue>
    </source>
</reference>
<protein>
    <recommendedName>
        <fullName evidence="2">Conotoxin Lt28.3</fullName>
    </recommendedName>
    <alternativeName>
        <fullName evidence="5">Conotoxin Lt15.6</fullName>
    </alternativeName>
</protein>
<accession>F6JWU9</accession>
<dbReference type="EMBL" id="HM003928">
    <property type="protein sequence ID" value="ADZ76486.1"/>
    <property type="molecule type" value="mRNA"/>
</dbReference>
<dbReference type="GO" id="GO:0005576">
    <property type="term" value="C:extracellular region"/>
    <property type="evidence" value="ECO:0007669"/>
    <property type="project" value="UniProtKB-SubCell"/>
</dbReference>
<dbReference type="GO" id="GO:0090729">
    <property type="term" value="F:toxin activity"/>
    <property type="evidence" value="ECO:0007669"/>
    <property type="project" value="UniProtKB-KW"/>
</dbReference>
<evidence type="ECO:0000255" key="1"/>
<evidence type="ECO:0000303" key="2">
    <source>
    </source>
</evidence>
<evidence type="ECO:0000305" key="3"/>
<evidence type="ECO:0000305" key="4">
    <source>
    </source>
</evidence>
<evidence type="ECO:0000312" key="5">
    <source>
        <dbReference type="EMBL" id="ADZ76486.1"/>
    </source>
</evidence>
<feature type="signal peptide" evidence="1">
    <location>
        <begin position="1"/>
        <end position="21"/>
    </location>
</feature>
<feature type="propeptide" id="PRO_0000451011" evidence="4">
    <location>
        <begin position="22"/>
        <end position="40"/>
    </location>
</feature>
<feature type="chain" id="PRO_5003342427" description="Conotoxin Lt28.3" evidence="4">
    <location>
        <begin position="41"/>
        <end position="85"/>
    </location>
</feature>
<proteinExistence type="inferred from homology"/>
<sequence length="85" mass="9433">MPKLEMMLLVLLILPLCYIDAVGPLPPWNMEDEIIEHWQKLHCYEISDLTPWILCSPEPLCGGKGCCAQEVCDCSGPACTCPPCL</sequence>